<proteinExistence type="inferred from homology"/>
<protein>
    <recommendedName>
        <fullName>Mannitol-1-phosphate 5-dehydrogenase</fullName>
        <shortName>M1PDH</shortName>
        <shortName>MPD</shortName>
        <shortName>MPDH</shortName>
        <ecNumber>1.1.1.17</ecNumber>
    </recommendedName>
</protein>
<accession>Q6UQ76</accession>
<dbReference type="EC" id="1.1.1.17"/>
<dbReference type="EMBL" id="AY364263">
    <property type="protein sequence ID" value="AAQ63948.1"/>
    <property type="molecule type" value="Genomic_DNA"/>
</dbReference>
<dbReference type="RefSeq" id="XP_018390108.1">
    <property type="nucleotide sequence ID" value="XM_018526447.1"/>
</dbReference>
<dbReference type="SMR" id="Q6UQ76"/>
<dbReference type="GeneID" id="29112041"/>
<dbReference type="KEGG" id="aalt:CC77DRAFT_1028464"/>
<dbReference type="VEuPathDB" id="FungiDB:CC77DRAFT_1028464"/>
<dbReference type="OMA" id="APFIERK"/>
<dbReference type="GO" id="GO:0005829">
    <property type="term" value="C:cytosol"/>
    <property type="evidence" value="ECO:0007669"/>
    <property type="project" value="TreeGrafter"/>
</dbReference>
<dbReference type="GO" id="GO:0008926">
    <property type="term" value="F:mannitol-1-phosphate 5-dehydrogenase activity"/>
    <property type="evidence" value="ECO:0007669"/>
    <property type="project" value="UniProtKB-EC"/>
</dbReference>
<dbReference type="GO" id="GO:0019592">
    <property type="term" value="P:mannitol catabolic process"/>
    <property type="evidence" value="ECO:0007669"/>
    <property type="project" value="TreeGrafter"/>
</dbReference>
<dbReference type="Gene3D" id="1.10.1040.10">
    <property type="entry name" value="N-(1-d-carboxylethyl)-l-norvaline Dehydrogenase, domain 2"/>
    <property type="match status" value="1"/>
</dbReference>
<dbReference type="Gene3D" id="3.40.50.720">
    <property type="entry name" value="NAD(P)-binding Rossmann-like Domain"/>
    <property type="match status" value="1"/>
</dbReference>
<dbReference type="HAMAP" id="MF_00196">
    <property type="entry name" value="Mannitol_dehydrog"/>
    <property type="match status" value="1"/>
</dbReference>
<dbReference type="InterPro" id="IPR008927">
    <property type="entry name" value="6-PGluconate_DH-like_C_sf"/>
</dbReference>
<dbReference type="InterPro" id="IPR013328">
    <property type="entry name" value="6PGD_dom2"/>
</dbReference>
<dbReference type="InterPro" id="IPR023028">
    <property type="entry name" value="Mannitol_1_phos_5_DH"/>
</dbReference>
<dbReference type="InterPro" id="IPR000669">
    <property type="entry name" value="Mannitol_DH"/>
</dbReference>
<dbReference type="InterPro" id="IPR013118">
    <property type="entry name" value="Mannitol_DH_C"/>
</dbReference>
<dbReference type="InterPro" id="IPR013131">
    <property type="entry name" value="Mannitol_DH_N"/>
</dbReference>
<dbReference type="InterPro" id="IPR036291">
    <property type="entry name" value="NAD(P)-bd_dom_sf"/>
</dbReference>
<dbReference type="NCBIfam" id="NF002652">
    <property type="entry name" value="PRK02318.2-5"/>
    <property type="match status" value="1"/>
</dbReference>
<dbReference type="PANTHER" id="PTHR30524:SF0">
    <property type="entry name" value="ALTRONATE OXIDOREDUCTASE-RELATED"/>
    <property type="match status" value="1"/>
</dbReference>
<dbReference type="PANTHER" id="PTHR30524">
    <property type="entry name" value="MANNITOL-1-PHOSPHATE 5-DEHYDROGENASE"/>
    <property type="match status" value="1"/>
</dbReference>
<dbReference type="Pfam" id="PF01232">
    <property type="entry name" value="Mannitol_dh"/>
    <property type="match status" value="1"/>
</dbReference>
<dbReference type="Pfam" id="PF08125">
    <property type="entry name" value="Mannitol_dh_C"/>
    <property type="match status" value="1"/>
</dbReference>
<dbReference type="PRINTS" id="PR00084">
    <property type="entry name" value="MTLDHDRGNASE"/>
</dbReference>
<dbReference type="SUPFAM" id="SSF48179">
    <property type="entry name" value="6-phosphogluconate dehydrogenase C-terminal domain-like"/>
    <property type="match status" value="1"/>
</dbReference>
<dbReference type="SUPFAM" id="SSF51735">
    <property type="entry name" value="NAD(P)-binding Rossmann-fold domains"/>
    <property type="match status" value="1"/>
</dbReference>
<name>MTLD_ALTAL</name>
<reference key="1">
    <citation type="journal article" date="2007" name="Fungal Genet. Biol.">
        <title>Mannitol metabolism in the phytopathogenic fungus Alternaria alternata.</title>
        <authorList>
            <person name="Velez H."/>
            <person name="Glassbrook N.J."/>
            <person name="Daub M.E."/>
        </authorList>
    </citation>
    <scope>NUCLEOTIDE SEQUENCE [GENOMIC DNA]</scope>
    <scope>FUNCTION</scope>
</reference>
<organism>
    <name type="scientific">Alternaria alternata</name>
    <name type="common">Alternaria rot fungus</name>
    <name type="synonym">Torula alternata</name>
    <dbReference type="NCBI Taxonomy" id="5599"/>
    <lineage>
        <taxon>Eukaryota</taxon>
        <taxon>Fungi</taxon>
        <taxon>Dikarya</taxon>
        <taxon>Ascomycota</taxon>
        <taxon>Pezizomycotina</taxon>
        <taxon>Dothideomycetes</taxon>
        <taxon>Pleosporomycetidae</taxon>
        <taxon>Pleosporales</taxon>
        <taxon>Pleosporineae</taxon>
        <taxon>Pleosporaceae</taxon>
        <taxon>Alternaria</taxon>
        <taxon>Alternaria sect. Alternaria</taxon>
        <taxon>Alternaria alternata complex</taxon>
    </lineage>
</organism>
<keyword id="KW-0520">NAD</keyword>
<keyword id="KW-0560">Oxidoreductase</keyword>
<comment type="function">
    <text evidence="2">Catalyzes the NAD(H)-dependent interconversion of D-fructose 6-phosphate and D-mannitol 1-phosphate in the mannitol metabolic pathway. Has a strong preference for NADH over NADPH.</text>
</comment>
<comment type="catalytic activity">
    <reaction>
        <text>D-mannitol 1-phosphate + NAD(+) = beta-D-fructose 6-phosphate + NADH + H(+)</text>
        <dbReference type="Rhea" id="RHEA:19661"/>
        <dbReference type="ChEBI" id="CHEBI:15378"/>
        <dbReference type="ChEBI" id="CHEBI:57540"/>
        <dbReference type="ChEBI" id="CHEBI:57634"/>
        <dbReference type="ChEBI" id="CHEBI:57945"/>
        <dbReference type="ChEBI" id="CHEBI:61381"/>
        <dbReference type="EC" id="1.1.1.17"/>
    </reaction>
</comment>
<comment type="subunit">
    <text evidence="1">Monomer.</text>
</comment>
<comment type="similarity">
    <text evidence="3">Belongs to the mannitol dehydrogenase family.</text>
</comment>
<evidence type="ECO:0000250" key="1"/>
<evidence type="ECO:0000269" key="2">
    <source>
    </source>
</evidence>
<evidence type="ECO:0000305" key="3"/>
<sequence length="390" mass="43550">MSYEKKAVHFGGGNIGRGFVAEFLHNSGYEVVFVDVMDSIIESLQKTKTYTVTEIGDDGERKFTIDHYRAINSKHEMDKVVQEIASADVVTCAVGPNILKFVAEPVAKAIEARTLDYPIAVIACENAINATTTWRGFIESKLSEETKKNIDSKARFANSAIDRIVPQQPPNGGLDVVIEKFHEWCVEQKPFENGGKKPDVKGIHYVDDLEPYIERKLFTVNTSHATAAYYGHQNKVQYIHEVLHDKKLHDTVRDAVKETAHLIVTKHGVETAEQDAYVEEIIKRISNPVLKDNVERVGRAPLRKLSRKERFIGPAAQLAERGEKVDALLGAVEQAYRFQNVEGDEESVELAKILKENSAEEVVTKVNGIEKGQPLFDRLVAIVKKVQGGS</sequence>
<feature type="chain" id="PRO_0000371517" description="Mannitol-1-phosphate 5-dehydrogenase">
    <location>
        <begin position="1"/>
        <end position="390"/>
    </location>
</feature>
<feature type="active site" evidence="1">
    <location>
        <position position="216"/>
    </location>
</feature>
<feature type="binding site" evidence="1">
    <location>
        <begin position="7"/>
        <end position="18"/>
    </location>
    <ligand>
        <name>NAD(+)</name>
        <dbReference type="ChEBI" id="CHEBI:57540"/>
    </ligand>
</feature>